<reference key="1">
    <citation type="journal article" date="2005" name="PLoS Biol.">
        <title>Major structural differences and novel potential virulence mechanisms from the genomes of multiple Campylobacter species.</title>
        <authorList>
            <person name="Fouts D.E."/>
            <person name="Mongodin E.F."/>
            <person name="Mandrell R.E."/>
            <person name="Miller W.G."/>
            <person name="Rasko D.A."/>
            <person name="Ravel J."/>
            <person name="Brinkac L.M."/>
            <person name="DeBoy R.T."/>
            <person name="Parker C.T."/>
            <person name="Daugherty S.C."/>
            <person name="Dodson R.J."/>
            <person name="Durkin A.S."/>
            <person name="Madupu R."/>
            <person name="Sullivan S.A."/>
            <person name="Shetty J.U."/>
            <person name="Ayodeji M.A."/>
            <person name="Shvartsbeyn A."/>
            <person name="Schatz M.C."/>
            <person name="Badger J.H."/>
            <person name="Fraser C.M."/>
            <person name="Nelson K.E."/>
        </authorList>
    </citation>
    <scope>NUCLEOTIDE SEQUENCE [LARGE SCALE GENOMIC DNA]</scope>
    <source>
        <strain>RM1221</strain>
    </source>
</reference>
<reference key="2">
    <citation type="journal article" date="2011" name="Biochemistry">
        <title>Exploiting topological constraints to reveal buried sequence motifs in the membrane-bound N-linked oligosaccharyl transferases.</title>
        <authorList>
            <person name="Jaffee M.B."/>
            <person name="Imperiali B."/>
        </authorList>
    </citation>
    <scope>DOMAIN</scope>
</reference>
<reference key="3">
    <citation type="journal article" date="2010" name="J. Biol. Chem.">
        <title>Comparative structural biology of eubacterial and archaeal oligosaccharyltransferases.</title>
        <authorList>
            <person name="Maita N."/>
            <person name="Nyirenda J."/>
            <person name="Igura M."/>
            <person name="Kamishikiryo J."/>
            <person name="Kohda D."/>
        </authorList>
    </citation>
    <scope>X-RAY CRYSTALLOGRAPHY (2.80 ANGSTROMS) OF 428-713</scope>
    <scope>FUNCTION</scope>
    <scope>MUTAGENESIS OF SER-52; ASN-53; ASP-54; MET-568; SER-569; LEU-570 AND ILE-571</scope>
    <source>
        <strain>RM1221</strain>
    </source>
</reference>
<keyword id="KW-0002">3D-structure</keyword>
<keyword id="KW-0997">Cell inner membrane</keyword>
<keyword id="KW-1003">Cell membrane</keyword>
<keyword id="KW-0325">Glycoprotein</keyword>
<keyword id="KW-0328">Glycosyltransferase</keyword>
<keyword id="KW-0460">Magnesium</keyword>
<keyword id="KW-0464">Manganese</keyword>
<keyword id="KW-0472">Membrane</keyword>
<keyword id="KW-0479">Metal-binding</keyword>
<keyword id="KW-0808">Transferase</keyword>
<keyword id="KW-0812">Transmembrane</keyword>
<keyword id="KW-1133">Transmembrane helix</keyword>
<gene>
    <name type="primary">pglB</name>
    <name type="ordered locus">CJE1268</name>
</gene>
<dbReference type="EC" id="2.4.99.19" evidence="3"/>
<dbReference type="EMBL" id="CP000025">
    <property type="protein sequence ID" value="AAW35590.1"/>
    <property type="molecule type" value="Genomic_DNA"/>
</dbReference>
<dbReference type="RefSeq" id="WP_011049884.1">
    <property type="nucleotide sequence ID" value="NC_003912.7"/>
</dbReference>
<dbReference type="PDB" id="3AAG">
    <property type="method" value="X-ray"/>
    <property type="resolution" value="2.80 A"/>
    <property type="chains" value="A/B=428-713"/>
</dbReference>
<dbReference type="PDBsum" id="3AAG"/>
<dbReference type="SMR" id="Q5HTX9"/>
<dbReference type="CAZy" id="GT66">
    <property type="family name" value="Glycosyltransferase Family 66"/>
</dbReference>
<dbReference type="GlyCosmos" id="Q5HTX9">
    <property type="glycosylation" value="1 site, No reported glycans"/>
</dbReference>
<dbReference type="KEGG" id="cjr:CJE1268"/>
<dbReference type="HOGENOM" id="CLU_024679_0_0_7"/>
<dbReference type="BRENDA" id="2.4.99.18">
    <property type="organism ID" value="1087"/>
</dbReference>
<dbReference type="BRENDA" id="2.4.99.19">
    <property type="organism ID" value="1087"/>
</dbReference>
<dbReference type="UniPathway" id="UPA00378"/>
<dbReference type="EvolutionaryTrace" id="Q5HTX9"/>
<dbReference type="GO" id="GO:0005886">
    <property type="term" value="C:plasma membrane"/>
    <property type="evidence" value="ECO:0007669"/>
    <property type="project" value="UniProtKB-SubCell"/>
</dbReference>
<dbReference type="GO" id="GO:0016757">
    <property type="term" value="F:glycosyltransferase activity"/>
    <property type="evidence" value="ECO:0000315"/>
    <property type="project" value="TIGR"/>
</dbReference>
<dbReference type="GO" id="GO:0046872">
    <property type="term" value="F:metal ion binding"/>
    <property type="evidence" value="ECO:0007669"/>
    <property type="project" value="UniProtKB-KW"/>
</dbReference>
<dbReference type="GO" id="GO:0004576">
    <property type="term" value="F:oligosaccharyl transferase activity"/>
    <property type="evidence" value="ECO:0007669"/>
    <property type="project" value="InterPro"/>
</dbReference>
<dbReference type="GO" id="GO:0006487">
    <property type="term" value="P:protein N-linked glycosylation"/>
    <property type="evidence" value="ECO:0000315"/>
    <property type="project" value="TIGR"/>
</dbReference>
<dbReference type="FunFam" id="3.40.1380.40:FF:000001">
    <property type="entry name" value="Undecaprenyl-diphosphooligosaccharide--protein glycotransferase"/>
    <property type="match status" value="1"/>
</dbReference>
<dbReference type="Gene3D" id="3.40.1380.40">
    <property type="match status" value="1"/>
</dbReference>
<dbReference type="InterPro" id="IPR003674">
    <property type="entry name" value="Oligo_trans_STT3"/>
</dbReference>
<dbReference type="InterPro" id="IPR048999">
    <property type="entry name" value="STT3-PglB_core"/>
</dbReference>
<dbReference type="InterPro" id="IPR048307">
    <property type="entry name" value="STT3_N"/>
</dbReference>
<dbReference type="InterPro" id="IPR041563">
    <property type="entry name" value="STT3_PglB_C"/>
</dbReference>
<dbReference type="PANTHER" id="PTHR13872">
    <property type="entry name" value="DOLICHYL-DIPHOSPHOOLIGOSACCHARIDE--PROTEIN GLYCOSYLTRANSFERASE SUBUNIT"/>
    <property type="match status" value="1"/>
</dbReference>
<dbReference type="PANTHER" id="PTHR13872:SF1">
    <property type="entry name" value="DOLICHYL-DIPHOSPHOOLIGOSACCHARIDE--PROTEIN GLYCOSYLTRANSFERASE SUBUNIT STT3B"/>
    <property type="match status" value="1"/>
</dbReference>
<dbReference type="Pfam" id="PF02516">
    <property type="entry name" value="STT3"/>
    <property type="match status" value="1"/>
</dbReference>
<dbReference type="Pfam" id="PF21436">
    <property type="entry name" value="STT3-PglB_core"/>
    <property type="match status" value="1"/>
</dbReference>
<dbReference type="Pfam" id="PF18527">
    <property type="entry name" value="STT3_PglB_C"/>
    <property type="match status" value="1"/>
</dbReference>
<proteinExistence type="evidence at protein level"/>
<comment type="function">
    <text evidence="3">Oligosaccharyltransferase that catalyzes the transfer of a preassembled heptasaccharide from a lipid donor to an asparagine residue in nascent polypeptide chains, affording a beta-linked glycan to the asparagine side chain of target proteins.</text>
</comment>
<comment type="function">
    <text evidence="1">Oligosaccharyl transferase (OST) that catalyzes the initial transfer of a defined glycan (GalNAc(2)GlcGalNAc(3)Bac(NAc)(2) in eubacteria, where Bac(NAc)(2) is di-N-acetyl bacillosamine) from the lipid carrier undecaprenol-pyrophosphate to an asparagine residue within an Asp/Glu-Asn-X-Ser/Thr consensus motif in nascent polypeptide chains, the first step in protein N-glycosylation.</text>
</comment>
<comment type="catalytic activity">
    <reaction evidence="3">
        <text>tritrans,heptacis-undecaprenyl diphosphooligosaccharide + [protein]-L-asparagine = tritrans,heptacis-undecaprenyl diphosphate + a glycoprotein with the oligosaccharide chain attached by N-beta-D-glycosyl linkage to protein L-asparagine.</text>
        <dbReference type="EC" id="2.4.99.19"/>
    </reaction>
</comment>
<comment type="cofactor">
    <cofactor evidence="1">
        <name>Mg(2+)</name>
        <dbReference type="ChEBI" id="CHEBI:18420"/>
    </cofactor>
    <cofactor evidence="1">
        <name>Mn(2+)</name>
        <dbReference type="ChEBI" id="CHEBI:29035"/>
    </cofactor>
</comment>
<comment type="pathway">
    <text evidence="1">Protein modification; protein glycosylation.</text>
</comment>
<comment type="subcellular location">
    <subcellularLocation>
        <location evidence="1">Cell inner membrane</location>
        <topology evidence="1">Multi-pass membrane protein</topology>
    </subcellularLocation>
</comment>
<comment type="domain">
    <text evidence="1">Despite low primary sequence conservation between eukaryotic catalytic subunits and bacterial and archaeal single subunit OSTs (ssOST), structural comparison revealed several common motifs at spatially equivalent positions, like the DXD motif 1 on the external loop 1 and the DXD motif 2 on the external loop 2 involved in binding of the metal ion cofactor and the carboxamide group of the acceptor asparagine, the conserved Glu residue of the TIXE/SVSE motif on the external loop 5 involved in catalysis, as well as the WWDYG and the DK/MI motifs in the globular domain that define the binding pocket for the +2 Ser/Thr of the acceptor sequon. In bacterial ssOSTs, an Arg residue was found to interact with a negatively charged side chain at the -2 position of the sequon. This Arg is conserved in bacterial enzymes and correlates with an extended sequon requirement (Asp-X-Asn-X-Ser/Thr) for bacterial N-glycosylation.</text>
</comment>
<comment type="similarity">
    <text evidence="4">Belongs to the STT3 family.</text>
</comment>
<name>PGLB_CAMJR</name>
<feature type="chain" id="PRO_0000422588" description="Undecaprenyl-diphosphooligosaccharide--protein glycotransferase">
    <location>
        <begin position="1"/>
        <end position="713"/>
    </location>
</feature>
<feature type="topological domain" description="Cytoplasmic" evidence="4">
    <location>
        <begin position="1"/>
        <end position="11"/>
    </location>
</feature>
<feature type="transmembrane region" description="Helical" evidence="1">
    <location>
        <begin position="12"/>
        <end position="35"/>
    </location>
</feature>
<feature type="topological domain" description="Periplasmic" evidence="4">
    <location>
        <begin position="36"/>
        <end position="96"/>
    </location>
</feature>
<feature type="transmembrane region" description="Helical" evidence="1">
    <location>
        <begin position="97"/>
        <end position="122"/>
    </location>
</feature>
<feature type="topological domain" description="Cytoplasmic" evidence="4">
    <location>
        <begin position="123"/>
        <end position="125"/>
    </location>
</feature>
<feature type="transmembrane region" description="Helical" evidence="1">
    <location>
        <begin position="126"/>
        <end position="144"/>
    </location>
</feature>
<feature type="topological domain" description="Periplasmic" evidence="4">
    <location>
        <begin position="145"/>
        <end position="152"/>
    </location>
</feature>
<feature type="transmembrane region" description="Helical" evidence="1">
    <location>
        <begin position="153"/>
        <end position="174"/>
    </location>
</feature>
<feature type="topological domain" description="Cytoplasmic" evidence="4">
    <location>
        <begin position="175"/>
        <end position="176"/>
    </location>
</feature>
<feature type="transmembrane region" description="Helical" evidence="1">
    <location>
        <begin position="177"/>
        <end position="192"/>
    </location>
</feature>
<feature type="topological domain" description="Periplasmic" evidence="4">
    <location>
        <begin position="193"/>
        <end position="197"/>
    </location>
</feature>
<feature type="transmembrane region" description="Helical" evidence="1">
    <location>
        <begin position="198"/>
        <end position="215"/>
    </location>
</feature>
<feature type="topological domain" description="Cytoplasmic" evidence="4">
    <location>
        <begin position="216"/>
        <end position="220"/>
    </location>
</feature>
<feature type="transmembrane region" description="Helical" evidence="1">
    <location>
        <begin position="221"/>
        <end position="233"/>
    </location>
</feature>
<feature type="topological domain" description="Periplasmic" evidence="4">
    <location>
        <begin position="234"/>
        <end position="237"/>
    </location>
</feature>
<feature type="transmembrane region" description="Helical" evidence="1">
    <location>
        <begin position="238"/>
        <end position="254"/>
    </location>
</feature>
<feature type="topological domain" description="Cytoplasmic" evidence="4">
    <location>
        <begin position="255"/>
        <end position="260"/>
    </location>
</feature>
<feature type="transmembrane region" description="Helical" evidence="1">
    <location>
        <begin position="261"/>
        <end position="278"/>
    </location>
</feature>
<feature type="topological domain" description="Periplasmic" evidence="4">
    <location>
        <begin position="279"/>
        <end position="324"/>
    </location>
</feature>
<feature type="transmembrane region" description="Helical" evidence="1">
    <location>
        <begin position="325"/>
        <end position="347"/>
    </location>
</feature>
<feature type="topological domain" description="Cytoplasmic" evidence="4">
    <location>
        <begin position="348"/>
        <end position="352"/>
    </location>
</feature>
<feature type="transmembrane region" description="Helical" evidence="1">
    <location>
        <begin position="353"/>
        <end position="369"/>
    </location>
</feature>
<feature type="topological domain" description="Periplasmic" evidence="4">
    <location>
        <begin position="370"/>
        <end position="373"/>
    </location>
</feature>
<feature type="transmembrane region" description="Helical" evidence="1">
    <location>
        <begin position="374"/>
        <end position="396"/>
    </location>
</feature>
<feature type="topological domain" description="Cytoplasmic" evidence="4">
    <location>
        <begin position="397"/>
        <end position="406"/>
    </location>
</feature>
<feature type="transmembrane region" description="Helical" evidence="1">
    <location>
        <begin position="407"/>
        <end position="427"/>
    </location>
</feature>
<feature type="topological domain" description="Periplasmic" evidence="4">
    <location>
        <begin position="428"/>
        <end position="713"/>
    </location>
</feature>
<feature type="region of interest" description="Interacts with target acceptor peptide in protein substrate" evidence="1">
    <location>
        <begin position="457"/>
        <end position="459"/>
    </location>
</feature>
<feature type="short sequence motif" description="DXD motif 1" evidence="5">
    <location>
        <begin position="52"/>
        <end position="54"/>
    </location>
</feature>
<feature type="short sequence motif" description="DXD motif 2" evidence="5">
    <location>
        <begin position="152"/>
        <end position="154"/>
    </location>
</feature>
<feature type="short sequence motif" description="TIXE motif" evidence="5">
    <location>
        <begin position="313"/>
        <end position="316"/>
    </location>
</feature>
<feature type="short sequence motif" description="WWDYG motif" evidence="5">
    <location>
        <begin position="457"/>
        <end position="461"/>
    </location>
</feature>
<feature type="short sequence motif" description="MI motif" evidence="2">
    <location>
        <begin position="568"/>
        <end position="575"/>
    </location>
</feature>
<feature type="binding site" evidence="1">
    <location>
        <position position="54"/>
    </location>
    <ligand>
        <name>Mn(2+)</name>
        <dbReference type="ChEBI" id="CHEBI:29035"/>
    </ligand>
</feature>
<feature type="binding site" evidence="1">
    <location>
        <position position="152"/>
    </location>
    <ligand>
        <name>Mn(2+)</name>
        <dbReference type="ChEBI" id="CHEBI:29035"/>
    </ligand>
</feature>
<feature type="binding site" evidence="1">
    <location>
        <begin position="194"/>
        <end position="196"/>
    </location>
    <ligand>
        <name>[alpha-D-GalNAc-(1-&gt;4)]2-[beta-D-Glc-(1-&gt;3)]-[alpha-D-GalNAc-(1-&gt;4)]2-alpha-D-GalNAc-(1-&gt;3)-alpha-D-diNAcBac-tri-trans,hepta-cis-undecaprenyl diphosphate</name>
        <dbReference type="ChEBI" id="CHEBI:68654"/>
    </ligand>
</feature>
<feature type="binding site" evidence="1">
    <location>
        <position position="291"/>
    </location>
    <ligand>
        <name>[alpha-D-GalNAc-(1-&gt;4)]2-[beta-D-Glc-(1-&gt;3)]-[alpha-D-GalNAc-(1-&gt;4)]2-alpha-D-GalNAc-(1-&gt;3)-alpha-D-diNAcBac-tri-trans,hepta-cis-undecaprenyl diphosphate</name>
        <dbReference type="ChEBI" id="CHEBI:68654"/>
    </ligand>
</feature>
<feature type="binding site" evidence="1">
    <location>
        <position position="316"/>
    </location>
    <ligand>
        <name>Mn(2+)</name>
        <dbReference type="ChEBI" id="CHEBI:29035"/>
    </ligand>
</feature>
<feature type="binding site" evidence="1">
    <location>
        <position position="372"/>
    </location>
    <ligand>
        <name>[alpha-D-GalNAc-(1-&gt;4)]2-[beta-D-Glc-(1-&gt;3)]-[alpha-D-GalNAc-(1-&gt;4)]2-alpha-D-GalNAc-(1-&gt;3)-alpha-D-diNAcBac-tri-trans,hepta-cis-undecaprenyl diphosphate</name>
        <dbReference type="ChEBI" id="CHEBI:68654"/>
    </ligand>
</feature>
<feature type="binding site" evidence="1">
    <location>
        <position position="462"/>
    </location>
    <ligand>
        <name>[alpha-D-GalNAc-(1-&gt;4)]2-[beta-D-Glc-(1-&gt;3)]-[alpha-D-GalNAc-(1-&gt;4)]2-alpha-D-GalNAc-(1-&gt;3)-alpha-D-diNAcBac-tri-trans,hepta-cis-undecaprenyl diphosphate</name>
        <dbReference type="ChEBI" id="CHEBI:68654"/>
    </ligand>
</feature>
<feature type="site" description="Interacts with target acceptor peptide in protein substrate" evidence="1">
    <location>
        <position position="54"/>
    </location>
</feature>
<feature type="site" description="Important for catalytic activity" evidence="1">
    <location>
        <position position="145"/>
    </location>
</feature>
<feature type="site" description="Interacts with target acceptor peptide in protein substrate" evidence="1">
    <location>
        <position position="316"/>
    </location>
</feature>
<feature type="site" description="Interacts with target acceptor peptide in protein substrate; important for extended sequon recognition" evidence="1">
    <location>
        <position position="328"/>
    </location>
</feature>
<feature type="site" description="Interacts with target acceptor peptide in protein substrate" evidence="1">
    <location>
        <position position="571"/>
    </location>
</feature>
<feature type="glycosylation site" description="N-linked (DATDGlc) asparagine" evidence="1">
    <location>
        <position position="534"/>
    </location>
</feature>
<feature type="mutagenesis site" description="Strongly reduced catalytic activity." evidence="3">
    <original>S</original>
    <variation>E</variation>
    <variation>D</variation>
    <location>
        <position position="52"/>
    </location>
</feature>
<feature type="mutagenesis site" description="Reduced catalytic activity." evidence="3">
    <original>N</original>
    <variation>A</variation>
    <location>
        <position position="53"/>
    </location>
</feature>
<feature type="mutagenesis site" description="Strongly reduced catalytic activity." evidence="3">
    <original>D</original>
    <variation>A</variation>
    <location>
        <position position="54"/>
    </location>
</feature>
<feature type="mutagenesis site" description="No effect on catalytic activity." evidence="3">
    <original>M</original>
    <variation>A</variation>
    <location>
        <position position="568"/>
    </location>
</feature>
<feature type="mutagenesis site" description="No effect on catalytic activity." evidence="3">
    <original>S</original>
    <variation>A</variation>
    <location>
        <position position="569"/>
    </location>
</feature>
<feature type="mutagenesis site" description="No effect on catalytic activity." evidence="3">
    <original>L</original>
    <variation>A</variation>
    <location>
        <position position="570"/>
    </location>
</feature>
<feature type="mutagenesis site" description="Strong reduction in catalytic activity." evidence="3">
    <original>I</original>
    <variation>A</variation>
    <location>
        <position position="571"/>
    </location>
</feature>
<feature type="helix" evidence="6">
    <location>
        <begin position="437"/>
        <end position="444"/>
    </location>
</feature>
<feature type="strand" evidence="6">
    <location>
        <begin position="453"/>
        <end position="455"/>
    </location>
</feature>
<feature type="helix" evidence="6">
    <location>
        <begin position="458"/>
        <end position="460"/>
    </location>
</feature>
<feature type="helix" evidence="6">
    <location>
        <begin position="461"/>
        <end position="468"/>
    </location>
</feature>
<feature type="helix" evidence="6">
    <location>
        <begin position="481"/>
        <end position="492"/>
    </location>
</feature>
<feature type="helix" evidence="6">
    <location>
        <begin position="495"/>
        <end position="510"/>
    </location>
</feature>
<feature type="helix" evidence="6">
    <location>
        <begin position="525"/>
        <end position="531"/>
    </location>
</feature>
<feature type="turn" evidence="6">
    <location>
        <begin position="532"/>
        <end position="534"/>
    </location>
</feature>
<feature type="helix" evidence="6">
    <location>
        <begin position="538"/>
        <end position="544"/>
    </location>
</feature>
<feature type="strand" evidence="6">
    <location>
        <begin position="560"/>
        <end position="565"/>
    </location>
</feature>
<feature type="helix" evidence="6">
    <location>
        <begin position="566"/>
        <end position="570"/>
    </location>
</feature>
<feature type="helix" evidence="6">
    <location>
        <begin position="572"/>
        <end position="577"/>
    </location>
</feature>
<feature type="strand" evidence="6">
    <location>
        <begin position="594"/>
        <end position="597"/>
    </location>
</feature>
<feature type="strand" evidence="6">
    <location>
        <begin position="599"/>
        <end position="601"/>
    </location>
</feature>
<feature type="strand" evidence="6">
    <location>
        <begin position="606"/>
        <end position="609"/>
    </location>
</feature>
<feature type="strand" evidence="6">
    <location>
        <begin position="614"/>
        <end position="616"/>
    </location>
</feature>
<feature type="turn" evidence="6">
    <location>
        <begin position="624"/>
        <end position="626"/>
    </location>
</feature>
<feature type="strand" evidence="6">
    <location>
        <begin position="632"/>
        <end position="639"/>
    </location>
</feature>
<feature type="strand" evidence="6">
    <location>
        <begin position="644"/>
        <end position="649"/>
    </location>
</feature>
<feature type="strand" evidence="6">
    <location>
        <begin position="657"/>
        <end position="660"/>
    </location>
</feature>
<feature type="strand" evidence="6">
    <location>
        <begin position="670"/>
        <end position="674"/>
    </location>
</feature>
<feature type="turn" evidence="6">
    <location>
        <begin position="678"/>
        <end position="680"/>
    </location>
</feature>
<feature type="helix" evidence="6">
    <location>
        <begin position="682"/>
        <end position="686"/>
    </location>
</feature>
<feature type="strand" evidence="6">
    <location>
        <begin position="697"/>
        <end position="699"/>
    </location>
</feature>
<feature type="strand" evidence="6">
    <location>
        <begin position="704"/>
        <end position="712"/>
    </location>
</feature>
<organism>
    <name type="scientific">Campylobacter jejuni (strain RM1221)</name>
    <dbReference type="NCBI Taxonomy" id="195099"/>
    <lineage>
        <taxon>Bacteria</taxon>
        <taxon>Pseudomonadati</taxon>
        <taxon>Campylobacterota</taxon>
        <taxon>Epsilonproteobacteria</taxon>
        <taxon>Campylobacterales</taxon>
        <taxon>Campylobacteraceae</taxon>
        <taxon>Campylobacter</taxon>
    </lineage>
</organism>
<accession>Q5HTX9</accession>
<sequence>MLKKEYLKNPYLVLFAMIILAYVFSVLCRFYWIWWASEFNEYFFNNQLMIISNDGYAFAEGARDMIAGFHQPNDLSYYGSSLSTLTYWLYKITPFSFESIILYMSTFLSSLVVIPIILLANEYKRPLMGFVAALLASVANSYYNRTMSGYYDTDMLVIVLPMFILFFMVRMILKKDFFSLIALPLFIGIYLWWYPSSYTLNVALIGLFLIYTLIFHRKEKIFYIAVILSSLTLSNIAWFYQSAIIVILFALFALEQKRLNFMIIGILGSATLIFLILSGGVDPILYQLKFYIFRNDESANLTQGFMYFNVNQTIQEVENVDFSEFMRRISGSEIVFLFSLFGFVWLLRKHKSMIMALPILVLGFLALKGGLRFTIYSVPVMALGFGFLLSEFKAILVKKYSQLTSNVCIVFATILTLAPVFIHIYNYKAPTVFSQNEASLLNQLKNIANREDYVVTWWDYGYPVRYYSDVKTLVDGGKHLGKDNFFPSFALSKDEQAAANMARLSVEYTEKSFYAPQNDILKSDILQAMMKDYNQSNVDLFLASLSKPDFKIDTPKTRDIYLYMPARMSLIFSTVASFSFINLDTGVLDKPFTFSTAYPLDVKNGEIYLSNGVVLSDDFRSFKIGDNVVSVNSIVEINSIKQGEYKITPIDDKAQFYIFYLKDSAIPYAQFILMDKTMFNSAYVQMFFLGNYDKNLFDLVINSRDAKVFKLKI</sequence>
<protein>
    <recommendedName>
        <fullName>Undecaprenyl-diphosphooligosaccharide--protein glycotransferase</fullName>
        <ecNumber evidence="3">2.4.99.19</ecNumber>
    </recommendedName>
    <alternativeName>
        <fullName>Protein glycosylation B</fullName>
    </alternativeName>
</protein>
<evidence type="ECO:0000250" key="1">
    <source>
        <dbReference type="UniProtKB" id="B9KDD4"/>
    </source>
</evidence>
<evidence type="ECO:0000250" key="2">
    <source>
        <dbReference type="UniProtKB" id="O29918"/>
    </source>
</evidence>
<evidence type="ECO:0000269" key="3">
    <source>
    </source>
</evidence>
<evidence type="ECO:0000305" key="4"/>
<evidence type="ECO:0000305" key="5">
    <source>
    </source>
</evidence>
<evidence type="ECO:0007829" key="6">
    <source>
        <dbReference type="PDB" id="3AAG"/>
    </source>
</evidence>